<sequence>MGNVPGKIDQEDSFNDVRPDSSYNTTSSNSVIKQYDEEASSRVRTRRTTSLVNNILNGNNARTKTGSHLSSTSRRKTSREKELAKEAHAKQLVVRCSETVDGGFLAPFGCYSFEKLDYDATVVKNLIIKRKLAPFYTPLQDFDESWTRDELIKIVDGLPLHDTFDENLEEFEDVPIGNLRKSTFNELIDKSLSKKEQRRMHAKIFRARLYKKRILWQENENETFLERKLEMKRIGSKSSNVEDNTSSQPRKNYHLPSDDLKYTLYKNGSECPICFLYFPGPFNYSKCCQQPICTECFVQIKRADPHFPHDEVDPTEPQTNDSEKDPNLLTSEPANCPYCATASFSITYQPPTNRETGIGGMPADSYVYKDAAISRADGGQPNISAITSDTIRPDWEIKLNKERARLMRRSANATAIHISNRLIDPSHSRRRNTSHSITPIHDESTSASRSPEPTINELEDQMVREAIRLSLEDQDNRKKSKNRNTSLRP</sequence>
<gene>
    <name type="primary">SIP5</name>
    <name type="ordered locus">YMR140W</name>
    <name type="ORF">YM9375.09</name>
</gene>
<reference key="1">
    <citation type="journal article" date="1997" name="Nature">
        <title>The nucleotide sequence of Saccharomyces cerevisiae chromosome XIII.</title>
        <authorList>
            <person name="Bowman S."/>
            <person name="Churcher C.M."/>
            <person name="Badcock K."/>
            <person name="Brown D."/>
            <person name="Chillingworth T."/>
            <person name="Connor R."/>
            <person name="Dedman K."/>
            <person name="Devlin K."/>
            <person name="Gentles S."/>
            <person name="Hamlin N."/>
            <person name="Hunt S."/>
            <person name="Jagels K."/>
            <person name="Lye G."/>
            <person name="Moule S."/>
            <person name="Odell C."/>
            <person name="Pearson D."/>
            <person name="Rajandream M.A."/>
            <person name="Rice P."/>
            <person name="Skelton J."/>
            <person name="Walsh S.V."/>
            <person name="Whitehead S."/>
            <person name="Barrell B.G."/>
        </authorList>
    </citation>
    <scope>NUCLEOTIDE SEQUENCE [LARGE SCALE GENOMIC DNA]</scope>
    <source>
        <strain>ATCC 204508 / S288c</strain>
    </source>
</reference>
<reference key="2">
    <citation type="journal article" date="2014" name="G3 (Bethesda)">
        <title>The reference genome sequence of Saccharomyces cerevisiae: Then and now.</title>
        <authorList>
            <person name="Engel S.R."/>
            <person name="Dietrich F.S."/>
            <person name="Fisk D.G."/>
            <person name="Binkley G."/>
            <person name="Balakrishnan R."/>
            <person name="Costanzo M.C."/>
            <person name="Dwight S.S."/>
            <person name="Hitz B.C."/>
            <person name="Karra K."/>
            <person name="Nash R.S."/>
            <person name="Weng S."/>
            <person name="Wong E.D."/>
            <person name="Lloyd P."/>
            <person name="Skrzypek M.S."/>
            <person name="Miyasato S.R."/>
            <person name="Simison M."/>
            <person name="Cherry J.M."/>
        </authorList>
    </citation>
    <scope>GENOME REANNOTATION</scope>
    <source>
        <strain>ATCC 204508 / S288c</strain>
    </source>
</reference>
<reference key="3">
    <citation type="journal article" date="2000" name="Genetics">
        <title>Sip5 interacts with both the Reg1/Glc7 protein phosphatase and the Snf1 protein kinase of Saccharomyces cerevisiae.</title>
        <authorList>
            <person name="Sanz P."/>
            <person name="Ludin K."/>
            <person name="Carlson M."/>
        </authorList>
    </citation>
    <scope>FUNCTION</scope>
    <scope>INTERACTION WITH SNF1 AND REG1</scope>
</reference>
<reference key="4">
    <citation type="journal article" date="2003" name="Nature">
        <title>Global analysis of protein localization in budding yeast.</title>
        <authorList>
            <person name="Huh W.-K."/>
            <person name="Falvo J.V."/>
            <person name="Gerke L.C."/>
            <person name="Carroll A.S."/>
            <person name="Howson R.W."/>
            <person name="Weissman J.S."/>
            <person name="O'Shea E.K."/>
        </authorList>
    </citation>
    <scope>SUBCELLULAR LOCATION [LARGE SCALE ANALYSIS]</scope>
</reference>
<reference key="5">
    <citation type="journal article" date="2003" name="Nature">
        <title>Global analysis of protein expression in yeast.</title>
        <authorList>
            <person name="Ghaemmaghami S."/>
            <person name="Huh W.-K."/>
            <person name="Bower K."/>
            <person name="Howson R.W."/>
            <person name="Belle A."/>
            <person name="Dephoure N."/>
            <person name="O'Shea E.K."/>
            <person name="Weissman J.S."/>
        </authorList>
    </citation>
    <scope>LEVEL OF PROTEIN EXPRESSION [LARGE SCALE ANALYSIS]</scope>
</reference>
<reference key="6">
    <citation type="journal article" date="2005" name="PLoS Genet.">
        <title>Yeast model uncovers dual roles of mitochondria in action of artemisinin.</title>
        <authorList>
            <person name="Li W."/>
            <person name="Mo W."/>
            <person name="Shen D."/>
            <person name="Sun L."/>
            <person name="Wang J."/>
            <person name="Lu S."/>
            <person name="Gitschier J.M."/>
            <person name="Zhou B."/>
        </authorList>
    </citation>
    <scope>FUNCTION</scope>
</reference>
<reference key="7">
    <citation type="journal article" date="2007" name="J. Proteome Res.">
        <title>Large-scale phosphorylation analysis of alpha-factor-arrested Saccharomyces cerevisiae.</title>
        <authorList>
            <person name="Li X."/>
            <person name="Gerber S.A."/>
            <person name="Rudner A.D."/>
            <person name="Beausoleil S.A."/>
            <person name="Haas W."/>
            <person name="Villen J."/>
            <person name="Elias J.E."/>
            <person name="Gygi S.P."/>
        </authorList>
    </citation>
    <scope>PHOSPHORYLATION [LARGE SCALE ANALYSIS] AT THR-183 AND THR-433</scope>
    <scope>IDENTIFICATION BY MASS SPECTROMETRY [LARGE SCALE ANALYSIS]</scope>
    <source>
        <strain>ADR376</strain>
    </source>
</reference>
<reference key="8">
    <citation type="journal article" date="2008" name="Mol. Cell. Biol.">
        <title>Phosphorylation by casein kinase 2 regulates Nap1 localization and function.</title>
        <authorList>
            <person name="Calvert M.E.K."/>
            <person name="Keck K.M."/>
            <person name="Ptak C."/>
            <person name="Shabanowitz J."/>
            <person name="Hunt D.F."/>
            <person name="Pemberton L.F."/>
        </authorList>
    </citation>
    <scope>INTERACTION WITH NAP1</scope>
    <scope>IDENTIFICATION BY MASS SPECTROMETRY</scope>
</reference>
<reference key="9">
    <citation type="journal article" date="2008" name="Mol. Cell. Proteomics">
        <title>A multidimensional chromatography technology for in-depth phosphoproteome analysis.</title>
        <authorList>
            <person name="Albuquerque C.P."/>
            <person name="Smolka M.B."/>
            <person name="Payne S.H."/>
            <person name="Bafna V."/>
            <person name="Eng J."/>
            <person name="Zhou H."/>
        </authorList>
    </citation>
    <scope>IDENTIFICATION BY MASS SPECTROMETRY [LARGE SCALE ANALYSIS]</scope>
</reference>
<reference key="10">
    <citation type="journal article" date="2009" name="Science">
        <title>Global analysis of Cdk1 substrate phosphorylation sites provides insights into evolution.</title>
        <authorList>
            <person name="Holt L.J."/>
            <person name="Tuch B.B."/>
            <person name="Villen J."/>
            <person name="Johnson A.D."/>
            <person name="Gygi S.P."/>
            <person name="Morgan D.O."/>
        </authorList>
    </citation>
    <scope>PHOSPHORYLATION [LARGE SCALE ANALYSIS] AT SER-13; THR-183; SER-436 AND THR-438</scope>
    <scope>IDENTIFICATION BY MASS SPECTROMETRY [LARGE SCALE ANALYSIS]</scope>
</reference>
<evidence type="ECO:0000256" key="1">
    <source>
        <dbReference type="SAM" id="MobiDB-lite"/>
    </source>
</evidence>
<evidence type="ECO:0000269" key="2">
    <source>
    </source>
</evidence>
<evidence type="ECO:0000269" key="3">
    <source>
    </source>
</evidence>
<evidence type="ECO:0000269" key="4">
    <source>
    </source>
</evidence>
<evidence type="ECO:0000269" key="5">
    <source>
    </source>
</evidence>
<evidence type="ECO:0000269" key="6">
    <source>
    </source>
</evidence>
<evidence type="ECO:0000305" key="7"/>
<evidence type="ECO:0007744" key="8">
    <source>
    </source>
</evidence>
<evidence type="ECO:0007744" key="9">
    <source>
    </source>
</evidence>
<feature type="chain" id="PRO_0000203303" description="Protein SIP5">
    <location>
        <begin position="1"/>
        <end position="489"/>
    </location>
</feature>
<feature type="region of interest" description="Disordered" evidence="1">
    <location>
        <begin position="1"/>
        <end position="84"/>
    </location>
</feature>
<feature type="region of interest" description="Disordered" evidence="1">
    <location>
        <begin position="419"/>
        <end position="489"/>
    </location>
</feature>
<feature type="compositionally biased region" description="Polar residues" evidence="1">
    <location>
        <begin position="21"/>
        <end position="32"/>
    </location>
</feature>
<feature type="compositionally biased region" description="Polar residues" evidence="1">
    <location>
        <begin position="51"/>
        <end position="69"/>
    </location>
</feature>
<feature type="compositionally biased region" description="Basic and acidic residues" evidence="1">
    <location>
        <begin position="461"/>
        <end position="477"/>
    </location>
</feature>
<feature type="modified residue" description="Phosphoserine" evidence="9">
    <location>
        <position position="13"/>
    </location>
</feature>
<feature type="modified residue" description="Phosphothreonine" evidence="8 9">
    <location>
        <position position="183"/>
    </location>
</feature>
<feature type="modified residue" description="Phosphothreonine" evidence="8">
    <location>
        <position position="433"/>
    </location>
</feature>
<feature type="modified residue" description="Phosphoserine" evidence="9">
    <location>
        <position position="436"/>
    </location>
</feature>
<feature type="modified residue" description="Phosphothreonine" evidence="9">
    <location>
        <position position="438"/>
    </location>
</feature>
<protein>
    <recommendedName>
        <fullName>Protein SIP5</fullName>
    </recommendedName>
    <alternativeName>
        <fullName>SNF1-interacting protein 5</fullName>
    </alternativeName>
</protein>
<proteinExistence type="evidence at protein level"/>
<keyword id="KW-0963">Cytoplasm</keyword>
<keyword id="KW-0597">Phosphoprotein</keyword>
<keyword id="KW-1185">Reference proteome</keyword>
<dbReference type="EMBL" id="Z47071">
    <property type="protein sequence ID" value="CAA87354.1"/>
    <property type="molecule type" value="Genomic_DNA"/>
</dbReference>
<dbReference type="EMBL" id="BK006946">
    <property type="protein sequence ID" value="DAA10037.1"/>
    <property type="molecule type" value="Genomic_DNA"/>
</dbReference>
<dbReference type="PIR" id="S50396">
    <property type="entry name" value="S50396"/>
</dbReference>
<dbReference type="RefSeq" id="NP_013860.1">
    <property type="nucleotide sequence ID" value="NM_001182642.1"/>
</dbReference>
<dbReference type="BioGRID" id="35317">
    <property type="interactions" value="150"/>
</dbReference>
<dbReference type="DIP" id="DIP-4656N"/>
<dbReference type="FunCoup" id="P40210">
    <property type="interactions" value="92"/>
</dbReference>
<dbReference type="IntAct" id="P40210">
    <property type="interactions" value="7"/>
</dbReference>
<dbReference type="MINT" id="P40210"/>
<dbReference type="STRING" id="4932.YMR140W"/>
<dbReference type="GlyGen" id="P40210">
    <property type="glycosylation" value="1 site"/>
</dbReference>
<dbReference type="iPTMnet" id="P40210"/>
<dbReference type="PaxDb" id="4932-YMR140W"/>
<dbReference type="PeptideAtlas" id="P40210"/>
<dbReference type="EnsemblFungi" id="YMR140W_mRNA">
    <property type="protein sequence ID" value="YMR140W"/>
    <property type="gene ID" value="YMR140W"/>
</dbReference>
<dbReference type="GeneID" id="855171"/>
<dbReference type="KEGG" id="sce:YMR140W"/>
<dbReference type="AGR" id="SGD:S000004748"/>
<dbReference type="SGD" id="S000004748">
    <property type="gene designation" value="SIP5"/>
</dbReference>
<dbReference type="VEuPathDB" id="FungiDB:YMR140W"/>
<dbReference type="eggNOG" id="KOG2789">
    <property type="taxonomic scope" value="Eukaryota"/>
</dbReference>
<dbReference type="HOGENOM" id="CLU_009068_2_0_1"/>
<dbReference type="InParanoid" id="P40210"/>
<dbReference type="OMA" id="ISEPANC"/>
<dbReference type="OrthoDB" id="21471at2759"/>
<dbReference type="BioCyc" id="YEAST:G3O-32833-MONOMER"/>
<dbReference type="BioGRID-ORCS" id="855171">
    <property type="hits" value="6 hits in 10 CRISPR screens"/>
</dbReference>
<dbReference type="PRO" id="PR:P40210"/>
<dbReference type="Proteomes" id="UP000002311">
    <property type="component" value="Chromosome XIII"/>
</dbReference>
<dbReference type="RNAct" id="P40210">
    <property type="molecule type" value="protein"/>
</dbReference>
<dbReference type="GO" id="GO:0005737">
    <property type="term" value="C:cytoplasm"/>
    <property type="evidence" value="ECO:0007005"/>
    <property type="project" value="SGD"/>
</dbReference>
<dbReference type="GO" id="GO:0042149">
    <property type="term" value="P:cellular response to glucose starvation"/>
    <property type="evidence" value="ECO:0000315"/>
    <property type="project" value="SGD"/>
</dbReference>
<dbReference type="CDD" id="cd24139">
    <property type="entry name" value="SIP5-like"/>
    <property type="match status" value="1"/>
</dbReference>
<dbReference type="InterPro" id="IPR039301">
    <property type="entry name" value="Sip5/DA2"/>
</dbReference>
<dbReference type="PANTHER" id="PTHR31315">
    <property type="entry name" value="PROTEIN SIP5"/>
    <property type="match status" value="1"/>
</dbReference>
<dbReference type="PANTHER" id="PTHR31315:SF1">
    <property type="entry name" value="PROTEIN SIP5"/>
    <property type="match status" value="1"/>
</dbReference>
<organism>
    <name type="scientific">Saccharomyces cerevisiae (strain ATCC 204508 / S288c)</name>
    <name type="common">Baker's yeast</name>
    <dbReference type="NCBI Taxonomy" id="559292"/>
    <lineage>
        <taxon>Eukaryota</taxon>
        <taxon>Fungi</taxon>
        <taxon>Dikarya</taxon>
        <taxon>Ascomycota</taxon>
        <taxon>Saccharomycotina</taxon>
        <taxon>Saccharomycetes</taxon>
        <taxon>Saccharomycetales</taxon>
        <taxon>Saccharomycetaceae</taxon>
        <taxon>Saccharomyces</taxon>
    </lineage>
</organism>
<accession>P40210</accession>
<accession>D6VZW3</accession>
<comment type="function">
    <text evidence="2 5">May negatively regulate the SNF1 kinase by promoting the interaction of the REG1/GLC7 phosphatase complex with the kinase. Deletion of SIP5 promotes resistance to artemisinin, which is probably an indirect effect of an action on the electron transport chain.</text>
</comment>
<comment type="subunit">
    <text evidence="2 6">Interacts with NPA1, SNF1 and REG1.</text>
</comment>
<comment type="subcellular location">
    <subcellularLocation>
        <location evidence="3">Cytoplasm</location>
    </subcellularLocation>
</comment>
<comment type="miscellaneous">
    <text evidence="4">Present with 556 molecules/cell in log phase SD medium.</text>
</comment>
<comment type="similarity">
    <text evidence="7">Belongs to the SIP5 family.</text>
</comment>
<name>SIP5_YEAST</name>